<feature type="chain" id="PRO_0000223921" description="Leucine-rich repeat-containing protein 46">
    <location>
        <begin position="1"/>
        <end position="323"/>
    </location>
</feature>
<feature type="repeat" description="LRR 1">
    <location>
        <begin position="49"/>
        <end position="70"/>
    </location>
</feature>
<feature type="repeat" description="LRR 2">
    <location>
        <begin position="71"/>
        <end position="92"/>
    </location>
</feature>
<feature type="repeat" description="LRR 3">
    <location>
        <begin position="93"/>
        <end position="114"/>
    </location>
</feature>
<feature type="repeat" description="LRR 4">
    <location>
        <begin position="115"/>
        <end position="135"/>
    </location>
</feature>
<feature type="domain" description="LRRCT">
    <location>
        <begin position="146"/>
        <end position="188"/>
    </location>
</feature>
<feature type="region of interest" description="Disordered" evidence="3">
    <location>
        <begin position="249"/>
        <end position="323"/>
    </location>
</feature>
<feature type="coiled-coil region" evidence="2">
    <location>
        <begin position="203"/>
        <end position="228"/>
    </location>
</feature>
<feature type="compositionally biased region" description="Low complexity" evidence="3">
    <location>
        <begin position="267"/>
        <end position="316"/>
    </location>
</feature>
<feature type="modified residue" description="Phosphothreonine" evidence="6">
    <location>
        <position position="178"/>
    </location>
</feature>
<feature type="modified residue" description="Phosphoserine" evidence="6">
    <location>
        <position position="179"/>
    </location>
</feature>
<feature type="modified residue" description="Phosphoserine" evidence="6">
    <location>
        <position position="185"/>
    </location>
</feature>
<feature type="modified residue" description="Phosphoserine" evidence="6">
    <location>
        <position position="186"/>
    </location>
</feature>
<feature type="modified residue" description="Phosphoserine" evidence="1">
    <location>
        <position position="303"/>
    </location>
</feature>
<feature type="sequence conflict" description="In Ref. 1; BAB24177." evidence="5" ref="1">
    <original>T</original>
    <variation>K</variation>
    <location>
        <position position="234"/>
    </location>
</feature>
<protein>
    <recommendedName>
        <fullName>Leucine-rich repeat-containing protein 46</fullName>
    </recommendedName>
</protein>
<organism>
    <name type="scientific">Mus musculus</name>
    <name type="common">Mouse</name>
    <dbReference type="NCBI Taxonomy" id="10090"/>
    <lineage>
        <taxon>Eukaryota</taxon>
        <taxon>Metazoa</taxon>
        <taxon>Chordata</taxon>
        <taxon>Craniata</taxon>
        <taxon>Vertebrata</taxon>
        <taxon>Euteleostomi</taxon>
        <taxon>Mammalia</taxon>
        <taxon>Eutheria</taxon>
        <taxon>Euarchontoglires</taxon>
        <taxon>Glires</taxon>
        <taxon>Rodentia</taxon>
        <taxon>Myomorpha</taxon>
        <taxon>Muroidea</taxon>
        <taxon>Muridae</taxon>
        <taxon>Murinae</taxon>
        <taxon>Mus</taxon>
        <taxon>Mus</taxon>
    </lineage>
</organism>
<proteinExistence type="evidence at protein level"/>
<comment type="function">
    <text evidence="4">Required for normal spermatogenesis and male fertility. Plays an important role in sperm flagellum biogenesis.</text>
</comment>
<comment type="subcellular location">
    <subcellularLocation>
        <location evidence="4">Cell projection</location>
        <location evidence="4">Cilium</location>
        <location evidence="4">Flagellum</location>
    </subcellularLocation>
</comment>
<comment type="tissue specificity">
    <text evidence="4">Testis-specific (at protein level).</text>
</comment>
<comment type="disruption phenotype">
    <text evidence="4">Male mice show reduced total sperm counts, impaired sperm motility, and are completely infertile. Sperm exhibit a variety of abnormal head shapes, as well as coiled, short, or absent flagella.</text>
</comment>
<sequence length="323" mass="36048">MPGDEQEAKKAAQRTEEGVHITEALITKRNLTFPGDEDLSEKMFHTLGELETVRLDGEGITCIGNLEKLRNIHSLYLQSNKIQRIENLACITSLRFLSLARNQIRHVENLLDLQYLQFLDLSENLIETLKLDELPESLLILNLCGNPCTNQEGYRKMVIGALPLLLDLDKQPILERWTSDEEDKSSDDDDEFPELNGPFCAERGFFKDLEQELHQHQERRQQAALTEHLSRMETQPVLTDLPLLPAVPMAGDCSSTATDQPGKESAPKATSSTQTASTTKKQVSKNQKSSVQARKGALAATTSKTSQAATPSMTKMTNKKSTK</sequence>
<evidence type="ECO:0000250" key="1">
    <source>
        <dbReference type="UniProtKB" id="Q6AXZ2"/>
    </source>
</evidence>
<evidence type="ECO:0000255" key="2"/>
<evidence type="ECO:0000256" key="3">
    <source>
        <dbReference type="SAM" id="MobiDB-lite"/>
    </source>
</evidence>
<evidence type="ECO:0000269" key="4">
    <source>
    </source>
</evidence>
<evidence type="ECO:0000305" key="5"/>
<evidence type="ECO:0007744" key="6">
    <source>
    </source>
</evidence>
<name>LRC46_MOUSE</name>
<keyword id="KW-0966">Cell projection</keyword>
<keyword id="KW-0969">Cilium</keyword>
<keyword id="KW-0175">Coiled coil</keyword>
<keyword id="KW-0221">Differentiation</keyword>
<keyword id="KW-0282">Flagellum</keyword>
<keyword id="KW-0433">Leucine-rich repeat</keyword>
<keyword id="KW-0597">Phosphoprotein</keyword>
<keyword id="KW-1185">Reference proteome</keyword>
<keyword id="KW-0677">Repeat</keyword>
<keyword id="KW-0744">Spermatogenesis</keyword>
<gene>
    <name type="primary">Lrrc46</name>
</gene>
<accession>Q9DAP0</accession>
<accession>Q8R1Z3</accession>
<reference key="1">
    <citation type="journal article" date="2005" name="Science">
        <title>The transcriptional landscape of the mammalian genome.</title>
        <authorList>
            <person name="Carninci P."/>
            <person name="Kasukawa T."/>
            <person name="Katayama S."/>
            <person name="Gough J."/>
            <person name="Frith M.C."/>
            <person name="Maeda N."/>
            <person name="Oyama R."/>
            <person name="Ravasi T."/>
            <person name="Lenhard B."/>
            <person name="Wells C."/>
            <person name="Kodzius R."/>
            <person name="Shimokawa K."/>
            <person name="Bajic V.B."/>
            <person name="Brenner S.E."/>
            <person name="Batalov S."/>
            <person name="Forrest A.R."/>
            <person name="Zavolan M."/>
            <person name="Davis M.J."/>
            <person name="Wilming L.G."/>
            <person name="Aidinis V."/>
            <person name="Allen J.E."/>
            <person name="Ambesi-Impiombato A."/>
            <person name="Apweiler R."/>
            <person name="Aturaliya R.N."/>
            <person name="Bailey T.L."/>
            <person name="Bansal M."/>
            <person name="Baxter L."/>
            <person name="Beisel K.W."/>
            <person name="Bersano T."/>
            <person name="Bono H."/>
            <person name="Chalk A.M."/>
            <person name="Chiu K.P."/>
            <person name="Choudhary V."/>
            <person name="Christoffels A."/>
            <person name="Clutterbuck D.R."/>
            <person name="Crowe M.L."/>
            <person name="Dalla E."/>
            <person name="Dalrymple B.P."/>
            <person name="de Bono B."/>
            <person name="Della Gatta G."/>
            <person name="di Bernardo D."/>
            <person name="Down T."/>
            <person name="Engstrom P."/>
            <person name="Fagiolini M."/>
            <person name="Faulkner G."/>
            <person name="Fletcher C.F."/>
            <person name="Fukushima T."/>
            <person name="Furuno M."/>
            <person name="Futaki S."/>
            <person name="Gariboldi M."/>
            <person name="Georgii-Hemming P."/>
            <person name="Gingeras T.R."/>
            <person name="Gojobori T."/>
            <person name="Green R.E."/>
            <person name="Gustincich S."/>
            <person name="Harbers M."/>
            <person name="Hayashi Y."/>
            <person name="Hensch T.K."/>
            <person name="Hirokawa N."/>
            <person name="Hill D."/>
            <person name="Huminiecki L."/>
            <person name="Iacono M."/>
            <person name="Ikeo K."/>
            <person name="Iwama A."/>
            <person name="Ishikawa T."/>
            <person name="Jakt M."/>
            <person name="Kanapin A."/>
            <person name="Katoh M."/>
            <person name="Kawasawa Y."/>
            <person name="Kelso J."/>
            <person name="Kitamura H."/>
            <person name="Kitano H."/>
            <person name="Kollias G."/>
            <person name="Krishnan S.P."/>
            <person name="Kruger A."/>
            <person name="Kummerfeld S.K."/>
            <person name="Kurochkin I.V."/>
            <person name="Lareau L.F."/>
            <person name="Lazarevic D."/>
            <person name="Lipovich L."/>
            <person name="Liu J."/>
            <person name="Liuni S."/>
            <person name="McWilliam S."/>
            <person name="Madan Babu M."/>
            <person name="Madera M."/>
            <person name="Marchionni L."/>
            <person name="Matsuda H."/>
            <person name="Matsuzawa S."/>
            <person name="Miki H."/>
            <person name="Mignone F."/>
            <person name="Miyake S."/>
            <person name="Morris K."/>
            <person name="Mottagui-Tabar S."/>
            <person name="Mulder N."/>
            <person name="Nakano N."/>
            <person name="Nakauchi H."/>
            <person name="Ng P."/>
            <person name="Nilsson R."/>
            <person name="Nishiguchi S."/>
            <person name="Nishikawa S."/>
            <person name="Nori F."/>
            <person name="Ohara O."/>
            <person name="Okazaki Y."/>
            <person name="Orlando V."/>
            <person name="Pang K.C."/>
            <person name="Pavan W.J."/>
            <person name="Pavesi G."/>
            <person name="Pesole G."/>
            <person name="Petrovsky N."/>
            <person name="Piazza S."/>
            <person name="Reed J."/>
            <person name="Reid J.F."/>
            <person name="Ring B.Z."/>
            <person name="Ringwald M."/>
            <person name="Rost B."/>
            <person name="Ruan Y."/>
            <person name="Salzberg S.L."/>
            <person name="Sandelin A."/>
            <person name="Schneider C."/>
            <person name="Schoenbach C."/>
            <person name="Sekiguchi K."/>
            <person name="Semple C.A."/>
            <person name="Seno S."/>
            <person name="Sessa L."/>
            <person name="Sheng Y."/>
            <person name="Shibata Y."/>
            <person name="Shimada H."/>
            <person name="Shimada K."/>
            <person name="Silva D."/>
            <person name="Sinclair B."/>
            <person name="Sperling S."/>
            <person name="Stupka E."/>
            <person name="Sugiura K."/>
            <person name="Sultana R."/>
            <person name="Takenaka Y."/>
            <person name="Taki K."/>
            <person name="Tammoja K."/>
            <person name="Tan S.L."/>
            <person name="Tang S."/>
            <person name="Taylor M.S."/>
            <person name="Tegner J."/>
            <person name="Teichmann S.A."/>
            <person name="Ueda H.R."/>
            <person name="van Nimwegen E."/>
            <person name="Verardo R."/>
            <person name="Wei C.L."/>
            <person name="Yagi K."/>
            <person name="Yamanishi H."/>
            <person name="Zabarovsky E."/>
            <person name="Zhu S."/>
            <person name="Zimmer A."/>
            <person name="Hide W."/>
            <person name="Bult C."/>
            <person name="Grimmond S.M."/>
            <person name="Teasdale R.D."/>
            <person name="Liu E.T."/>
            <person name="Brusic V."/>
            <person name="Quackenbush J."/>
            <person name="Wahlestedt C."/>
            <person name="Mattick J.S."/>
            <person name="Hume D.A."/>
            <person name="Kai C."/>
            <person name="Sasaki D."/>
            <person name="Tomaru Y."/>
            <person name="Fukuda S."/>
            <person name="Kanamori-Katayama M."/>
            <person name="Suzuki M."/>
            <person name="Aoki J."/>
            <person name="Arakawa T."/>
            <person name="Iida J."/>
            <person name="Imamura K."/>
            <person name="Itoh M."/>
            <person name="Kato T."/>
            <person name="Kawaji H."/>
            <person name="Kawagashira N."/>
            <person name="Kawashima T."/>
            <person name="Kojima M."/>
            <person name="Kondo S."/>
            <person name="Konno H."/>
            <person name="Nakano K."/>
            <person name="Ninomiya N."/>
            <person name="Nishio T."/>
            <person name="Okada M."/>
            <person name="Plessy C."/>
            <person name="Shibata K."/>
            <person name="Shiraki T."/>
            <person name="Suzuki S."/>
            <person name="Tagami M."/>
            <person name="Waki K."/>
            <person name="Watahiki A."/>
            <person name="Okamura-Oho Y."/>
            <person name="Suzuki H."/>
            <person name="Kawai J."/>
            <person name="Hayashizaki Y."/>
        </authorList>
    </citation>
    <scope>NUCLEOTIDE SEQUENCE [LARGE SCALE MRNA]</scope>
    <source>
        <strain>C57BL/6J</strain>
        <tissue>Testis</tissue>
        <tissue>Visual cortex</tissue>
    </source>
</reference>
<reference key="2">
    <citation type="journal article" date="2004" name="Genome Res.">
        <title>The status, quality, and expansion of the NIH full-length cDNA project: the Mammalian Gene Collection (MGC).</title>
        <authorList>
            <consortium name="The MGC Project Team"/>
        </authorList>
    </citation>
    <scope>NUCLEOTIDE SEQUENCE [LARGE SCALE MRNA]</scope>
    <source>
        <tissue>Eye</tissue>
    </source>
</reference>
<reference key="3">
    <citation type="journal article" date="2010" name="Cell">
        <title>A tissue-specific atlas of mouse protein phosphorylation and expression.</title>
        <authorList>
            <person name="Huttlin E.L."/>
            <person name="Jedrychowski M.P."/>
            <person name="Elias J.E."/>
            <person name="Goswami T."/>
            <person name="Rad R."/>
            <person name="Beausoleil S.A."/>
            <person name="Villen J."/>
            <person name="Haas W."/>
            <person name="Sowa M.E."/>
            <person name="Gygi S.P."/>
        </authorList>
    </citation>
    <scope>PHOSPHORYLATION [LARGE SCALE ANALYSIS] AT THR-178; SER-179; SER-185 AND SER-186</scope>
    <scope>IDENTIFICATION BY MASS SPECTROMETRY [LARGE SCALE ANALYSIS]</scope>
    <source>
        <tissue>Testis</tissue>
    </source>
</reference>
<reference key="4">
    <citation type="journal article" date="2022" name="Int. J. Mol. Sci.">
        <title>LRRC46 Accumulates at the Midpiece of Sperm Flagella and Is Essential for Spermiogenesis and Male Fertility in Mouse.</title>
        <authorList>
            <person name="Yin Y."/>
            <person name="Mu W."/>
            <person name="Yu X."/>
            <person name="Wang Z."/>
            <person name="Xu K."/>
            <person name="Wu X."/>
            <person name="Cai Y."/>
            <person name="Zhang M."/>
            <person name="Lu G."/>
            <person name="Chan W.Y."/>
            <person name="Ma J."/>
            <person name="Huang T."/>
            <person name="Liu H."/>
        </authorList>
    </citation>
    <scope>FUNCTION</scope>
    <scope>DISRUPTION PHENOTYPE</scope>
    <scope>SUBCELLULAR LOCATION</scope>
    <scope>TISSUE SPECIFICITY</scope>
</reference>
<dbReference type="EMBL" id="AK005668">
    <property type="protein sequence ID" value="BAB24177.1"/>
    <property type="molecule type" value="mRNA"/>
</dbReference>
<dbReference type="EMBL" id="AK158517">
    <property type="protein sequence ID" value="BAE34541.1"/>
    <property type="molecule type" value="mRNA"/>
</dbReference>
<dbReference type="EMBL" id="BC022723">
    <property type="protein sequence ID" value="AAH22723.1"/>
    <property type="molecule type" value="mRNA"/>
</dbReference>
<dbReference type="CCDS" id="CCDS25311.1"/>
<dbReference type="RefSeq" id="NP_081302.2">
    <property type="nucleotide sequence ID" value="NM_027026.2"/>
</dbReference>
<dbReference type="SMR" id="Q9DAP0"/>
<dbReference type="FunCoup" id="Q9DAP0">
    <property type="interactions" value="23"/>
</dbReference>
<dbReference type="STRING" id="10090.ENSMUSP00000021251"/>
<dbReference type="GlyGen" id="Q9DAP0">
    <property type="glycosylation" value="1 site"/>
</dbReference>
<dbReference type="iPTMnet" id="Q9DAP0"/>
<dbReference type="PhosphoSitePlus" id="Q9DAP0"/>
<dbReference type="SwissPalm" id="Q9DAP0"/>
<dbReference type="PaxDb" id="10090-ENSMUSP00000021251"/>
<dbReference type="ProteomicsDB" id="290156"/>
<dbReference type="Antibodypedia" id="17777">
    <property type="antibodies" value="80 antibodies from 16 providers"/>
</dbReference>
<dbReference type="DNASU" id="69297"/>
<dbReference type="Ensembl" id="ENSMUST00000021251.7">
    <property type="protein sequence ID" value="ENSMUSP00000021251.7"/>
    <property type="gene ID" value="ENSMUSG00000020878.7"/>
</dbReference>
<dbReference type="GeneID" id="69297"/>
<dbReference type="KEGG" id="mmu:69297"/>
<dbReference type="UCSC" id="uc007ldl.1">
    <property type="organism name" value="mouse"/>
</dbReference>
<dbReference type="AGR" id="MGI:1916547"/>
<dbReference type="CTD" id="90506"/>
<dbReference type="MGI" id="MGI:1916547">
    <property type="gene designation" value="Lrrc46"/>
</dbReference>
<dbReference type="VEuPathDB" id="HostDB:ENSMUSG00000020878"/>
<dbReference type="eggNOG" id="KOG0531">
    <property type="taxonomic scope" value="Eukaryota"/>
</dbReference>
<dbReference type="GeneTree" id="ENSGT00940000161315"/>
<dbReference type="HOGENOM" id="CLU_075587_0_0_1"/>
<dbReference type="InParanoid" id="Q9DAP0"/>
<dbReference type="OMA" id="PRQRKET"/>
<dbReference type="OrthoDB" id="7451790at2759"/>
<dbReference type="PhylomeDB" id="Q9DAP0"/>
<dbReference type="TreeFam" id="TF324815"/>
<dbReference type="BioGRID-ORCS" id="69297">
    <property type="hits" value="5 hits in 79 CRISPR screens"/>
</dbReference>
<dbReference type="PRO" id="PR:Q9DAP0"/>
<dbReference type="Proteomes" id="UP000000589">
    <property type="component" value="Chromosome 11"/>
</dbReference>
<dbReference type="RNAct" id="Q9DAP0">
    <property type="molecule type" value="protein"/>
</dbReference>
<dbReference type="Bgee" id="ENSMUSG00000020878">
    <property type="expression patterns" value="Expressed in seminiferous tubule of testis and 75 other cell types or tissues"/>
</dbReference>
<dbReference type="GO" id="GO:0036126">
    <property type="term" value="C:sperm flagellum"/>
    <property type="evidence" value="ECO:0000314"/>
    <property type="project" value="UniProtKB"/>
</dbReference>
<dbReference type="GO" id="GO:0097225">
    <property type="term" value="C:sperm midpiece"/>
    <property type="evidence" value="ECO:0000314"/>
    <property type="project" value="MGI"/>
</dbReference>
<dbReference type="GO" id="GO:0098727">
    <property type="term" value="P:maintenance of cell number"/>
    <property type="evidence" value="ECO:0000315"/>
    <property type="project" value="MGI"/>
</dbReference>
<dbReference type="GO" id="GO:0007338">
    <property type="term" value="P:single fertilization"/>
    <property type="evidence" value="ECO:0000315"/>
    <property type="project" value="MGI"/>
</dbReference>
<dbReference type="GO" id="GO:0007288">
    <property type="term" value="P:sperm axoneme assembly"/>
    <property type="evidence" value="ECO:0000315"/>
    <property type="project" value="MGI"/>
</dbReference>
<dbReference type="GO" id="GO:0120316">
    <property type="term" value="P:sperm flagellum assembly"/>
    <property type="evidence" value="ECO:0000315"/>
    <property type="project" value="UniProtKB"/>
</dbReference>
<dbReference type="GO" id="GO:0120317">
    <property type="term" value="P:sperm mitochondrial sheath assembly"/>
    <property type="evidence" value="ECO:0000315"/>
    <property type="project" value="MGI"/>
</dbReference>
<dbReference type="GO" id="GO:0007286">
    <property type="term" value="P:spermatid development"/>
    <property type="evidence" value="ECO:0000315"/>
    <property type="project" value="MGI"/>
</dbReference>
<dbReference type="GO" id="GO:0007283">
    <property type="term" value="P:spermatogenesis"/>
    <property type="evidence" value="ECO:0000315"/>
    <property type="project" value="UniProtKB"/>
</dbReference>
<dbReference type="FunFam" id="3.80.10.10:FF:000932">
    <property type="entry name" value="Leucine Rich Repeat family protein"/>
    <property type="match status" value="1"/>
</dbReference>
<dbReference type="Gene3D" id="3.80.10.10">
    <property type="entry name" value="Ribonuclease Inhibitor"/>
    <property type="match status" value="1"/>
</dbReference>
<dbReference type="InterPro" id="IPR050576">
    <property type="entry name" value="Cilia_flagella_integrity"/>
</dbReference>
<dbReference type="InterPro" id="IPR001611">
    <property type="entry name" value="Leu-rich_rpt"/>
</dbReference>
<dbReference type="InterPro" id="IPR032675">
    <property type="entry name" value="LRR_dom_sf"/>
</dbReference>
<dbReference type="PANTHER" id="PTHR45973:SF9">
    <property type="entry name" value="LEUCINE-RICH REPEAT-CONTAINING PROTEIN 46"/>
    <property type="match status" value="1"/>
</dbReference>
<dbReference type="PANTHER" id="PTHR45973">
    <property type="entry name" value="PROTEIN PHOSPHATASE 1 REGULATORY SUBUNIT SDS22-RELATED"/>
    <property type="match status" value="1"/>
</dbReference>
<dbReference type="Pfam" id="PF14580">
    <property type="entry name" value="LRR_9"/>
    <property type="match status" value="1"/>
</dbReference>
<dbReference type="SMART" id="SM00365">
    <property type="entry name" value="LRR_SD22"/>
    <property type="match status" value="3"/>
</dbReference>
<dbReference type="SUPFAM" id="SSF52058">
    <property type="entry name" value="L domain-like"/>
    <property type="match status" value="1"/>
</dbReference>
<dbReference type="PROSITE" id="PS51450">
    <property type="entry name" value="LRR"/>
    <property type="match status" value="5"/>
</dbReference>